<gene>
    <name evidence="1" type="primary">leuS</name>
    <name type="ordered locus">BH0251</name>
</gene>
<organism>
    <name type="scientific">Borrelia hermsii (strain HS1 / DAH)</name>
    <dbReference type="NCBI Taxonomy" id="314723"/>
    <lineage>
        <taxon>Bacteria</taxon>
        <taxon>Pseudomonadati</taxon>
        <taxon>Spirochaetota</taxon>
        <taxon>Spirochaetia</taxon>
        <taxon>Spirochaetales</taxon>
        <taxon>Borreliaceae</taxon>
        <taxon>Borrelia</taxon>
    </lineage>
</organism>
<name>SYL_BORHD</name>
<proteinExistence type="inferred from homology"/>
<protein>
    <recommendedName>
        <fullName evidence="1">Leucine--tRNA ligase</fullName>
        <ecNumber evidence="1">6.1.1.4</ecNumber>
    </recommendedName>
    <alternativeName>
        <fullName evidence="1">Leucyl-tRNA synthetase</fullName>
        <shortName evidence="1">LeuRS</shortName>
    </alternativeName>
</protein>
<reference key="1">
    <citation type="submission" date="2004-12" db="EMBL/GenBank/DDBJ databases">
        <title>The genome sequence of Borrelia hermsii and Borrelia turicatae: comparative analysis of two agents of endemic N. America relapsing fever.</title>
        <authorList>
            <person name="Porcella S.F."/>
            <person name="Raffel S.J."/>
            <person name="Schrumpf M.E."/>
            <person name="Montgomery B."/>
            <person name="Smith T."/>
            <person name="Schwan T.G."/>
        </authorList>
    </citation>
    <scope>NUCLEOTIDE SEQUENCE [LARGE SCALE GENOMIC DNA]</scope>
    <source>
        <strain>HS1 / DAH</strain>
    </source>
</reference>
<feature type="chain" id="PRO_1000091293" description="Leucine--tRNA ligase">
    <location>
        <begin position="1"/>
        <end position="842"/>
    </location>
</feature>
<feature type="short sequence motif" description="'HIGH' region">
    <location>
        <begin position="44"/>
        <end position="55"/>
    </location>
</feature>
<feature type="short sequence motif" description="'KMSKS' region">
    <location>
        <begin position="619"/>
        <end position="623"/>
    </location>
</feature>
<feature type="binding site" evidence="1">
    <location>
        <position position="622"/>
    </location>
    <ligand>
        <name>ATP</name>
        <dbReference type="ChEBI" id="CHEBI:30616"/>
    </ligand>
</feature>
<keyword id="KW-0030">Aminoacyl-tRNA synthetase</keyword>
<keyword id="KW-0067">ATP-binding</keyword>
<keyword id="KW-0963">Cytoplasm</keyword>
<keyword id="KW-0436">Ligase</keyword>
<keyword id="KW-0547">Nucleotide-binding</keyword>
<keyword id="KW-0648">Protein biosynthesis</keyword>
<evidence type="ECO:0000255" key="1">
    <source>
        <dbReference type="HAMAP-Rule" id="MF_00049"/>
    </source>
</evidence>
<dbReference type="EC" id="6.1.1.4" evidence="1"/>
<dbReference type="EMBL" id="CP000048">
    <property type="protein sequence ID" value="AAX16767.1"/>
    <property type="molecule type" value="Genomic_DNA"/>
</dbReference>
<dbReference type="RefSeq" id="WP_012422024.1">
    <property type="nucleotide sequence ID" value="NZ_CP073136.1"/>
</dbReference>
<dbReference type="SMR" id="B2RZW1"/>
<dbReference type="KEGG" id="bhr:BH0251"/>
<dbReference type="HOGENOM" id="CLU_004427_0_0_12"/>
<dbReference type="Proteomes" id="UP000008834">
    <property type="component" value="Chromosome"/>
</dbReference>
<dbReference type="GO" id="GO:0005829">
    <property type="term" value="C:cytosol"/>
    <property type="evidence" value="ECO:0007669"/>
    <property type="project" value="TreeGrafter"/>
</dbReference>
<dbReference type="GO" id="GO:0002161">
    <property type="term" value="F:aminoacyl-tRNA deacylase activity"/>
    <property type="evidence" value="ECO:0007669"/>
    <property type="project" value="InterPro"/>
</dbReference>
<dbReference type="GO" id="GO:0005524">
    <property type="term" value="F:ATP binding"/>
    <property type="evidence" value="ECO:0007669"/>
    <property type="project" value="UniProtKB-UniRule"/>
</dbReference>
<dbReference type="GO" id="GO:0004823">
    <property type="term" value="F:leucine-tRNA ligase activity"/>
    <property type="evidence" value="ECO:0007669"/>
    <property type="project" value="UniProtKB-UniRule"/>
</dbReference>
<dbReference type="GO" id="GO:0006429">
    <property type="term" value="P:leucyl-tRNA aminoacylation"/>
    <property type="evidence" value="ECO:0007669"/>
    <property type="project" value="UniProtKB-UniRule"/>
</dbReference>
<dbReference type="CDD" id="cd07958">
    <property type="entry name" value="Anticodon_Ia_Leu_BEm"/>
    <property type="match status" value="1"/>
</dbReference>
<dbReference type="CDD" id="cd00812">
    <property type="entry name" value="LeuRS_core"/>
    <property type="match status" value="1"/>
</dbReference>
<dbReference type="FunFam" id="3.40.50.620:FF:000056">
    <property type="entry name" value="Leucine--tRNA ligase"/>
    <property type="match status" value="1"/>
</dbReference>
<dbReference type="FunFam" id="3.40.50.620:FF:000077">
    <property type="entry name" value="Leucine--tRNA ligase"/>
    <property type="match status" value="1"/>
</dbReference>
<dbReference type="FunFam" id="1.10.730.10:FF:000011">
    <property type="entry name" value="Leucine--tRNA ligase chloroplastic/mitochondrial"/>
    <property type="match status" value="1"/>
</dbReference>
<dbReference type="Gene3D" id="3.40.50.620">
    <property type="entry name" value="HUPs"/>
    <property type="match status" value="2"/>
</dbReference>
<dbReference type="Gene3D" id="1.10.730.10">
    <property type="entry name" value="Isoleucyl-tRNA Synthetase, Domain 1"/>
    <property type="match status" value="1"/>
</dbReference>
<dbReference type="HAMAP" id="MF_00049_B">
    <property type="entry name" value="Leu_tRNA_synth_B"/>
    <property type="match status" value="1"/>
</dbReference>
<dbReference type="InterPro" id="IPR001412">
    <property type="entry name" value="aa-tRNA-synth_I_CS"/>
</dbReference>
<dbReference type="InterPro" id="IPR002300">
    <property type="entry name" value="aa-tRNA-synth_Ia"/>
</dbReference>
<dbReference type="InterPro" id="IPR002302">
    <property type="entry name" value="Leu-tRNA-ligase"/>
</dbReference>
<dbReference type="InterPro" id="IPR025709">
    <property type="entry name" value="Leu_tRNA-synth_edit"/>
</dbReference>
<dbReference type="InterPro" id="IPR013155">
    <property type="entry name" value="M/V/L/I-tRNA-synth_anticd-bd"/>
</dbReference>
<dbReference type="InterPro" id="IPR015413">
    <property type="entry name" value="Methionyl/Leucyl_tRNA_Synth"/>
</dbReference>
<dbReference type="InterPro" id="IPR014729">
    <property type="entry name" value="Rossmann-like_a/b/a_fold"/>
</dbReference>
<dbReference type="InterPro" id="IPR009080">
    <property type="entry name" value="tRNAsynth_Ia_anticodon-bd"/>
</dbReference>
<dbReference type="InterPro" id="IPR009008">
    <property type="entry name" value="Val/Leu/Ile-tRNA-synth_edit"/>
</dbReference>
<dbReference type="NCBIfam" id="TIGR00396">
    <property type="entry name" value="leuS_bact"/>
    <property type="match status" value="1"/>
</dbReference>
<dbReference type="PANTHER" id="PTHR43740:SF2">
    <property type="entry name" value="LEUCINE--TRNA LIGASE, MITOCHONDRIAL"/>
    <property type="match status" value="1"/>
</dbReference>
<dbReference type="PANTHER" id="PTHR43740">
    <property type="entry name" value="LEUCYL-TRNA SYNTHETASE"/>
    <property type="match status" value="1"/>
</dbReference>
<dbReference type="Pfam" id="PF08264">
    <property type="entry name" value="Anticodon_1"/>
    <property type="match status" value="1"/>
</dbReference>
<dbReference type="Pfam" id="PF00133">
    <property type="entry name" value="tRNA-synt_1"/>
    <property type="match status" value="1"/>
</dbReference>
<dbReference type="Pfam" id="PF13603">
    <property type="entry name" value="tRNA-synt_1_2"/>
    <property type="match status" value="1"/>
</dbReference>
<dbReference type="Pfam" id="PF09334">
    <property type="entry name" value="tRNA-synt_1g"/>
    <property type="match status" value="1"/>
</dbReference>
<dbReference type="PRINTS" id="PR00985">
    <property type="entry name" value="TRNASYNTHLEU"/>
</dbReference>
<dbReference type="SUPFAM" id="SSF47323">
    <property type="entry name" value="Anticodon-binding domain of a subclass of class I aminoacyl-tRNA synthetases"/>
    <property type="match status" value="1"/>
</dbReference>
<dbReference type="SUPFAM" id="SSF52374">
    <property type="entry name" value="Nucleotidylyl transferase"/>
    <property type="match status" value="1"/>
</dbReference>
<dbReference type="SUPFAM" id="SSF50677">
    <property type="entry name" value="ValRS/IleRS/LeuRS editing domain"/>
    <property type="match status" value="1"/>
</dbReference>
<dbReference type="PROSITE" id="PS00178">
    <property type="entry name" value="AA_TRNA_LIGASE_I"/>
    <property type="match status" value="1"/>
</dbReference>
<sequence>MSEYNFTKIEKKWQDYWDKHKTYKVNEDPNIPKEKRIYILDMFPYPSANGLHVGHPEGYTATDILTRYKLLNGFNVLHPIGFDSFGLPAENYAIQTGEHPKKITEKNIKKFKEQIKALGFAYDWDREIRTHDENYYKWTQWIFLKLYKKGLAYTKEMPVWYCPDLGTVLSNEEVIQTPDGPRSERGFHKVKRKPLRQWILKITEYAERLIKDLEEIDWPESVKEMQKNWIGKSTGAEIEFSVKASKEKIKVFTTRPDTIFGVTYLVLAPEHSIVDKITKDEFKPMIVEYRERETLKSDLERTSLEKDKTGVFTGAYAINPITGEEIPIWIGSYILGTYGTGAVMSVPAHDARDFEFAKKYNLPIKQVVSQTGNNEILTQPFTENGISINTPEEFNNLKTDEIKERVIKWLTENKKGQKKVNYKLRDWIFSRQRYWGEPIPIILDDDLNEIPLEEDELPLRLPEIENYKPSGTGESPLSRIQDWVNIKRNGKTYKRETNTMPQWAGSCWYYIRYLDPNNDNEFASKEKINYWMPVDLYIGGAEHSVLHLLYARFWHKVLYDLGYVNTKEPFKKLINQGMITSFAYQDENGILIPNDEVEKKDNKFFSKKNNKELKQIVAKMSKSLKNIINPDDIIKEYGADSMRIYEMFMGPLTDSKPWNTQGLIGIFRFLNKIWTIKNKELTKESASKEIISELHKTIKKVTEDIENLNFNTAISSLMIFINELLKHDKNYLEIFKPLTIILSPFAPHLGEELWEYMGETPSIFKSAKWPEYDPNLIIDNTREIVLQINGKIKDKIILNKGTNEEALKSIALKNHKIMQNIQNKQIIKIITVKDKLINIVTR</sequence>
<comment type="catalytic activity">
    <reaction evidence="1">
        <text>tRNA(Leu) + L-leucine + ATP = L-leucyl-tRNA(Leu) + AMP + diphosphate</text>
        <dbReference type="Rhea" id="RHEA:11688"/>
        <dbReference type="Rhea" id="RHEA-COMP:9613"/>
        <dbReference type="Rhea" id="RHEA-COMP:9622"/>
        <dbReference type="ChEBI" id="CHEBI:30616"/>
        <dbReference type="ChEBI" id="CHEBI:33019"/>
        <dbReference type="ChEBI" id="CHEBI:57427"/>
        <dbReference type="ChEBI" id="CHEBI:78442"/>
        <dbReference type="ChEBI" id="CHEBI:78494"/>
        <dbReference type="ChEBI" id="CHEBI:456215"/>
        <dbReference type="EC" id="6.1.1.4"/>
    </reaction>
</comment>
<comment type="subcellular location">
    <subcellularLocation>
        <location evidence="1">Cytoplasm</location>
    </subcellularLocation>
</comment>
<comment type="similarity">
    <text evidence="1">Belongs to the class-I aminoacyl-tRNA synthetase family.</text>
</comment>
<accession>B2RZW1</accession>